<feature type="chain" id="PRO_0000326046" description="Hydroxylysine kinase">
    <location>
        <begin position="1"/>
        <end position="355"/>
    </location>
</feature>
<feature type="active site" description="Proton acceptor" evidence="1">
    <location>
        <position position="215"/>
    </location>
</feature>
<evidence type="ECO:0000250" key="1"/>
<evidence type="ECO:0000305" key="2"/>
<proteinExistence type="evidence at transcript level"/>
<keyword id="KW-0963">Cytoplasm</keyword>
<keyword id="KW-0418">Kinase</keyword>
<keyword id="KW-1185">Reference proteome</keyword>
<keyword id="KW-0808">Transferase</keyword>
<comment type="function">
    <text evidence="1">Catalyzes the GTP-dependent phosphorylation of 5-hydroxy-L-lysine.</text>
</comment>
<comment type="catalytic activity">
    <reaction>
        <text>(5R)-5-hydroxy-L-lysine + GTP = (5R)-5-phosphooxy-L-lysine + GDP + H(+)</text>
        <dbReference type="Rhea" id="RHEA:19049"/>
        <dbReference type="ChEBI" id="CHEBI:15378"/>
        <dbReference type="ChEBI" id="CHEBI:37565"/>
        <dbReference type="ChEBI" id="CHEBI:57882"/>
        <dbReference type="ChEBI" id="CHEBI:58189"/>
        <dbReference type="ChEBI" id="CHEBI:58357"/>
        <dbReference type="EC" id="2.7.1.81"/>
    </reaction>
</comment>
<comment type="subcellular location">
    <subcellularLocation>
        <location evidence="2">Cytoplasm</location>
    </subcellularLocation>
</comment>
<comment type="similarity">
    <text evidence="2">Belongs to the aminoglycoside phosphotransferase family.</text>
</comment>
<dbReference type="EC" id="2.7.1.81"/>
<dbReference type="EMBL" id="BC154451">
    <property type="protein sequence ID" value="AAI54452.1"/>
    <property type="molecule type" value="mRNA"/>
</dbReference>
<dbReference type="RefSeq" id="NP_001107059.1">
    <property type="nucleotide sequence ID" value="NM_001113587.1"/>
</dbReference>
<dbReference type="SMR" id="A8WFT6"/>
<dbReference type="FunCoup" id="A8WFT6">
    <property type="interactions" value="808"/>
</dbReference>
<dbReference type="STRING" id="7955.ENSDARP00000152202"/>
<dbReference type="PaxDb" id="7955-ENSDARP00000104064"/>
<dbReference type="GeneID" id="559560"/>
<dbReference type="KEGG" id="dre:559560"/>
<dbReference type="AGR" id="ZFIN:ZDB-GENE-080204-31"/>
<dbReference type="CTD" id="559560"/>
<dbReference type="ZFIN" id="ZDB-GENE-080204-31">
    <property type="gene designation" value="hykk.2"/>
</dbReference>
<dbReference type="eggNOG" id="ENOG502QT7T">
    <property type="taxonomic scope" value="Eukaryota"/>
</dbReference>
<dbReference type="InParanoid" id="A8WFT6"/>
<dbReference type="OrthoDB" id="9973935at2759"/>
<dbReference type="PhylomeDB" id="A8WFT6"/>
<dbReference type="Reactome" id="R-DRE-71064">
    <property type="pathway name" value="Lysine catabolism"/>
</dbReference>
<dbReference type="PRO" id="PR:A8WFT6"/>
<dbReference type="Proteomes" id="UP000000437">
    <property type="component" value="Chromosome 22"/>
</dbReference>
<dbReference type="GO" id="GO:0005737">
    <property type="term" value="C:cytoplasm"/>
    <property type="evidence" value="ECO:0007669"/>
    <property type="project" value="UniProtKB-SubCell"/>
</dbReference>
<dbReference type="GO" id="GO:0019202">
    <property type="term" value="F:amino acid kinase activity"/>
    <property type="evidence" value="ECO:0000318"/>
    <property type="project" value="GO_Central"/>
</dbReference>
<dbReference type="GO" id="GO:0047992">
    <property type="term" value="F:hydroxylysine kinase activity"/>
    <property type="evidence" value="ECO:0007669"/>
    <property type="project" value="UniProtKB-EC"/>
</dbReference>
<dbReference type="FunFam" id="3.30.200.20:FF:000549">
    <property type="entry name" value="hydroxylysine kinase"/>
    <property type="match status" value="1"/>
</dbReference>
<dbReference type="FunFam" id="3.90.1200.10:FF:000007">
    <property type="entry name" value="hydroxylysine kinase isoform X1"/>
    <property type="match status" value="1"/>
</dbReference>
<dbReference type="Gene3D" id="3.90.1200.10">
    <property type="match status" value="1"/>
</dbReference>
<dbReference type="InterPro" id="IPR002575">
    <property type="entry name" value="Aminoglycoside_PTrfase"/>
</dbReference>
<dbReference type="InterPro" id="IPR011009">
    <property type="entry name" value="Kinase-like_dom_sf"/>
</dbReference>
<dbReference type="InterPro" id="IPR050249">
    <property type="entry name" value="Pseudomonas-type_ThrB"/>
</dbReference>
<dbReference type="PANTHER" id="PTHR21064">
    <property type="entry name" value="AMINOGLYCOSIDE PHOSPHOTRANSFERASE DOMAIN-CONTAINING PROTEIN-RELATED"/>
    <property type="match status" value="1"/>
</dbReference>
<dbReference type="PANTHER" id="PTHR21064:SF1">
    <property type="entry name" value="HYDROXYLYSINE KINASE"/>
    <property type="match status" value="1"/>
</dbReference>
<dbReference type="Pfam" id="PF01636">
    <property type="entry name" value="APH"/>
    <property type="match status" value="1"/>
</dbReference>
<dbReference type="SUPFAM" id="SSF56112">
    <property type="entry name" value="Protein kinase-like (PK-like)"/>
    <property type="match status" value="1"/>
</dbReference>
<reference key="1">
    <citation type="submission" date="2007-11" db="EMBL/GenBank/DDBJ databases">
        <authorList>
            <consortium name="NIH - Zebrafish Gene Collection (ZGC) project"/>
        </authorList>
    </citation>
    <scope>NUCLEOTIDE SEQUENCE [LARGE SCALE MRNA]</scope>
    <source>
        <tissue>Larval eye</tissue>
    </source>
</reference>
<organism>
    <name type="scientific">Danio rerio</name>
    <name type="common">Zebrafish</name>
    <name type="synonym">Brachydanio rerio</name>
    <dbReference type="NCBI Taxonomy" id="7955"/>
    <lineage>
        <taxon>Eukaryota</taxon>
        <taxon>Metazoa</taxon>
        <taxon>Chordata</taxon>
        <taxon>Craniata</taxon>
        <taxon>Vertebrata</taxon>
        <taxon>Euteleostomi</taxon>
        <taxon>Actinopterygii</taxon>
        <taxon>Neopterygii</taxon>
        <taxon>Teleostei</taxon>
        <taxon>Ostariophysi</taxon>
        <taxon>Cypriniformes</taxon>
        <taxon>Danionidae</taxon>
        <taxon>Danioninae</taxon>
        <taxon>Danio</taxon>
    </lineage>
</organism>
<name>HYKK_DANRE</name>
<sequence length="355" mass="40486">MSTKESKPNLSHSQVTDVVKRLYGLTASVVRPLPSYDDQNFYVAPSEGGEFVLKVMNSADSENVAVIELQTQSMNFLHQRGLPAQTALPTLTGQLMSLEEFDCGFGTQIYLVRLLTYLPGTTIAKITCSPQILYDVGKMAATLDTVLLQMEHPNTRVLQRERFIWKLTSIPLLNQYVHVMDGDPVQKIVKGVIEKYQVQVMPKLPLFRECINHGDFNDHNLLVKPDGPSKYKISGILDFADMSCGYFIFELAITIMYMMIESPTPLDVGGPVVAGWESVFPLNEAERDSLYWLVMCRFCQSLVLARYTVIQQPENEEYLMITSRKGLRHLSRLWELGKDEVERRWFQSAQQFRQI</sequence>
<gene>
    <name type="primary">hykk</name>
    <name type="synonym">agphd1</name>
    <name type="ORF">zgc:171550</name>
</gene>
<accession>A8WFT6</accession>
<protein>
    <recommendedName>
        <fullName>Hydroxylysine kinase</fullName>
        <shortName>5-hydroxy-L-lysine kinase</shortName>
        <ecNumber>2.7.1.81</ecNumber>
    </recommendedName>
</protein>